<keyword id="KW-0687">Ribonucleoprotein</keyword>
<keyword id="KW-0689">Ribosomal protein</keyword>
<keyword id="KW-0694">RNA-binding</keyword>
<keyword id="KW-0699">rRNA-binding</keyword>
<keyword id="KW-0820">tRNA-binding</keyword>
<comment type="function">
    <text evidence="1">Binds 23S rRNA and is also seen to make contacts with the A and possibly P site tRNAs.</text>
</comment>
<comment type="subunit">
    <text evidence="1">Part of the 50S ribosomal subunit.</text>
</comment>
<comment type="similarity">
    <text evidence="1">Belongs to the universal ribosomal protein uL16 family.</text>
</comment>
<organism>
    <name type="scientific">Streptococcus pyogenes serotype M49 (strain NZ131)</name>
    <dbReference type="NCBI Taxonomy" id="471876"/>
    <lineage>
        <taxon>Bacteria</taxon>
        <taxon>Bacillati</taxon>
        <taxon>Bacillota</taxon>
        <taxon>Bacilli</taxon>
        <taxon>Lactobacillales</taxon>
        <taxon>Streptococcaceae</taxon>
        <taxon>Streptococcus</taxon>
    </lineage>
</organism>
<accession>B5XJ43</accession>
<reference key="1">
    <citation type="journal article" date="2008" name="J. Bacteriol.">
        <title>Genome sequence of a nephritogenic and highly transformable M49 strain of Streptococcus pyogenes.</title>
        <authorList>
            <person name="McShan W.M."/>
            <person name="Ferretti J.J."/>
            <person name="Karasawa T."/>
            <person name="Suvorov A.N."/>
            <person name="Lin S."/>
            <person name="Qin B."/>
            <person name="Jia H."/>
            <person name="Kenton S."/>
            <person name="Najar F."/>
            <person name="Wu H."/>
            <person name="Scott J."/>
            <person name="Roe B.A."/>
            <person name="Savic D.J."/>
        </authorList>
    </citation>
    <scope>NUCLEOTIDE SEQUENCE [LARGE SCALE GENOMIC DNA]</scope>
    <source>
        <strain>NZ131</strain>
    </source>
</reference>
<feature type="chain" id="PRO_1000143038" description="Large ribosomal subunit protein uL16">
    <location>
        <begin position="1"/>
        <end position="137"/>
    </location>
</feature>
<name>RL16_STRPZ</name>
<dbReference type="EMBL" id="CP000829">
    <property type="protein sequence ID" value="ACI60411.1"/>
    <property type="molecule type" value="Genomic_DNA"/>
</dbReference>
<dbReference type="SMR" id="B5XJ43"/>
<dbReference type="KEGG" id="soz:Spy49_0054"/>
<dbReference type="HOGENOM" id="CLU_078858_2_1_9"/>
<dbReference type="Proteomes" id="UP000001039">
    <property type="component" value="Chromosome"/>
</dbReference>
<dbReference type="GO" id="GO:0022625">
    <property type="term" value="C:cytosolic large ribosomal subunit"/>
    <property type="evidence" value="ECO:0007669"/>
    <property type="project" value="TreeGrafter"/>
</dbReference>
<dbReference type="GO" id="GO:0019843">
    <property type="term" value="F:rRNA binding"/>
    <property type="evidence" value="ECO:0007669"/>
    <property type="project" value="UniProtKB-UniRule"/>
</dbReference>
<dbReference type="GO" id="GO:0003735">
    <property type="term" value="F:structural constituent of ribosome"/>
    <property type="evidence" value="ECO:0007669"/>
    <property type="project" value="InterPro"/>
</dbReference>
<dbReference type="GO" id="GO:0000049">
    <property type="term" value="F:tRNA binding"/>
    <property type="evidence" value="ECO:0007669"/>
    <property type="project" value="UniProtKB-KW"/>
</dbReference>
<dbReference type="GO" id="GO:0006412">
    <property type="term" value="P:translation"/>
    <property type="evidence" value="ECO:0007669"/>
    <property type="project" value="UniProtKB-UniRule"/>
</dbReference>
<dbReference type="CDD" id="cd01433">
    <property type="entry name" value="Ribosomal_L16_L10e"/>
    <property type="match status" value="1"/>
</dbReference>
<dbReference type="FunFam" id="3.90.1170.10:FF:000001">
    <property type="entry name" value="50S ribosomal protein L16"/>
    <property type="match status" value="1"/>
</dbReference>
<dbReference type="Gene3D" id="3.90.1170.10">
    <property type="entry name" value="Ribosomal protein L10e/L16"/>
    <property type="match status" value="1"/>
</dbReference>
<dbReference type="HAMAP" id="MF_01342">
    <property type="entry name" value="Ribosomal_uL16"/>
    <property type="match status" value="1"/>
</dbReference>
<dbReference type="InterPro" id="IPR047873">
    <property type="entry name" value="Ribosomal_uL16"/>
</dbReference>
<dbReference type="InterPro" id="IPR000114">
    <property type="entry name" value="Ribosomal_uL16_bact-type"/>
</dbReference>
<dbReference type="InterPro" id="IPR020798">
    <property type="entry name" value="Ribosomal_uL16_CS"/>
</dbReference>
<dbReference type="InterPro" id="IPR016180">
    <property type="entry name" value="Ribosomal_uL16_dom"/>
</dbReference>
<dbReference type="InterPro" id="IPR036920">
    <property type="entry name" value="Ribosomal_uL16_sf"/>
</dbReference>
<dbReference type="NCBIfam" id="TIGR01164">
    <property type="entry name" value="rplP_bact"/>
    <property type="match status" value="1"/>
</dbReference>
<dbReference type="PANTHER" id="PTHR12220">
    <property type="entry name" value="50S/60S RIBOSOMAL PROTEIN L16"/>
    <property type="match status" value="1"/>
</dbReference>
<dbReference type="PANTHER" id="PTHR12220:SF13">
    <property type="entry name" value="LARGE RIBOSOMAL SUBUNIT PROTEIN UL16M"/>
    <property type="match status" value="1"/>
</dbReference>
<dbReference type="Pfam" id="PF00252">
    <property type="entry name" value="Ribosomal_L16"/>
    <property type="match status" value="1"/>
</dbReference>
<dbReference type="PRINTS" id="PR00060">
    <property type="entry name" value="RIBOSOMALL16"/>
</dbReference>
<dbReference type="SUPFAM" id="SSF54686">
    <property type="entry name" value="Ribosomal protein L16p/L10e"/>
    <property type="match status" value="1"/>
</dbReference>
<dbReference type="PROSITE" id="PS00586">
    <property type="entry name" value="RIBOSOMAL_L16_1"/>
    <property type="match status" value="1"/>
</dbReference>
<dbReference type="PROSITE" id="PS00701">
    <property type="entry name" value="RIBOSOMAL_L16_2"/>
    <property type="match status" value="1"/>
</dbReference>
<gene>
    <name evidence="1" type="primary">rplP</name>
    <name type="ordered locus">Spy49_0054</name>
</gene>
<sequence length="137" mass="15452">MLVPKRVKHRREFRGKMRGEAKGGKEVSFGEYGLQATTSHWITNRQIEAARIAMTRYMKRGGKVWIKIFPHKSYTAKAIGVRMGSGKGAPEGWVAPVKRGKVMFEIAGVSEEIAREALRLASHKLPVKCKFVKREAE</sequence>
<evidence type="ECO:0000255" key="1">
    <source>
        <dbReference type="HAMAP-Rule" id="MF_01342"/>
    </source>
</evidence>
<evidence type="ECO:0000305" key="2"/>
<protein>
    <recommendedName>
        <fullName evidence="1">Large ribosomal subunit protein uL16</fullName>
    </recommendedName>
    <alternativeName>
        <fullName evidence="2">50S ribosomal protein L16</fullName>
    </alternativeName>
</protein>
<proteinExistence type="inferred from homology"/>